<accession>Q3JBF6</accession>
<evidence type="ECO:0000255" key="1">
    <source>
        <dbReference type="HAMAP-Rule" id="MF_00199"/>
    </source>
</evidence>
<sequence length="278" mass="31419">MAIYAIGDIQGCYDEFQQLLKEIHFDEQADQLWLAGDLVNRGPKSLEVIRFVHGLGKRAITVLGNHDLHLLAVAAGLQPLHSKDTLAAILSAPDREELITWLRHLPLLYRNSKLGITLIHAGLPPQWDIATAESCARELEAVLQGPNWRDFLAHMYGDKPVQWRDDLKGWERLRTISNCLTRLRYCDAKGRFSLKFKESPGTQTKGGLMPWFKVPHRASHGERIVFGHWATLEVGPYEGPVFALDGGCVWGGQLVALRLDKEEPQWFFVDCQGYSKIT</sequence>
<keyword id="KW-0378">Hydrolase</keyword>
<keyword id="KW-1185">Reference proteome</keyword>
<comment type="function">
    <text evidence="1">Hydrolyzes diadenosine 5',5'''-P1,P4-tetraphosphate to yield ADP.</text>
</comment>
<comment type="catalytic activity">
    <reaction evidence="1">
        <text>P(1),P(4)-bis(5'-adenosyl) tetraphosphate + H2O = 2 ADP + 2 H(+)</text>
        <dbReference type="Rhea" id="RHEA:24252"/>
        <dbReference type="ChEBI" id="CHEBI:15377"/>
        <dbReference type="ChEBI" id="CHEBI:15378"/>
        <dbReference type="ChEBI" id="CHEBI:58141"/>
        <dbReference type="ChEBI" id="CHEBI:456216"/>
        <dbReference type="EC" id="3.6.1.41"/>
    </reaction>
</comment>
<comment type="similarity">
    <text evidence="1">Belongs to the Ap4A hydrolase family.</text>
</comment>
<organism>
    <name type="scientific">Nitrosococcus oceani (strain ATCC 19707 / BCRC 17464 / JCM 30415 / NCIMB 11848 / C-107)</name>
    <dbReference type="NCBI Taxonomy" id="323261"/>
    <lineage>
        <taxon>Bacteria</taxon>
        <taxon>Pseudomonadati</taxon>
        <taxon>Pseudomonadota</taxon>
        <taxon>Gammaproteobacteria</taxon>
        <taxon>Chromatiales</taxon>
        <taxon>Chromatiaceae</taxon>
        <taxon>Nitrosococcus</taxon>
    </lineage>
</organism>
<dbReference type="EC" id="3.6.1.41" evidence="1"/>
<dbReference type="EMBL" id="CP000127">
    <property type="protein sequence ID" value="ABA57840.1"/>
    <property type="molecule type" value="Genomic_DNA"/>
</dbReference>
<dbReference type="RefSeq" id="WP_002811020.1">
    <property type="nucleotide sequence ID" value="NC_007484.1"/>
</dbReference>
<dbReference type="SMR" id="Q3JBF6"/>
<dbReference type="FunCoup" id="Q3JBF6">
    <property type="interactions" value="182"/>
</dbReference>
<dbReference type="STRING" id="323261.Noc_1345"/>
<dbReference type="KEGG" id="noc:Noc_1345"/>
<dbReference type="eggNOG" id="COG0639">
    <property type="taxonomic scope" value="Bacteria"/>
</dbReference>
<dbReference type="HOGENOM" id="CLU_056184_2_0_6"/>
<dbReference type="InParanoid" id="Q3JBF6"/>
<dbReference type="Proteomes" id="UP000006838">
    <property type="component" value="Chromosome"/>
</dbReference>
<dbReference type="GO" id="GO:0008803">
    <property type="term" value="F:bis(5'-nucleosyl)-tetraphosphatase (symmetrical) activity"/>
    <property type="evidence" value="ECO:0007669"/>
    <property type="project" value="UniProtKB-UniRule"/>
</dbReference>
<dbReference type="CDD" id="cd07422">
    <property type="entry name" value="MPP_ApaH"/>
    <property type="match status" value="1"/>
</dbReference>
<dbReference type="Gene3D" id="3.60.21.10">
    <property type="match status" value="1"/>
</dbReference>
<dbReference type="HAMAP" id="MF_00199">
    <property type="entry name" value="ApaH"/>
    <property type="match status" value="1"/>
</dbReference>
<dbReference type="InterPro" id="IPR004617">
    <property type="entry name" value="ApaH"/>
</dbReference>
<dbReference type="InterPro" id="IPR004843">
    <property type="entry name" value="Calcineurin-like_PHP_ApaH"/>
</dbReference>
<dbReference type="InterPro" id="IPR029052">
    <property type="entry name" value="Metallo-depent_PP-like"/>
</dbReference>
<dbReference type="NCBIfam" id="TIGR00668">
    <property type="entry name" value="apaH"/>
    <property type="match status" value="1"/>
</dbReference>
<dbReference type="NCBIfam" id="NF001204">
    <property type="entry name" value="PRK00166.1"/>
    <property type="match status" value="1"/>
</dbReference>
<dbReference type="PANTHER" id="PTHR40942">
    <property type="match status" value="1"/>
</dbReference>
<dbReference type="PANTHER" id="PTHR40942:SF4">
    <property type="entry name" value="CYTOCHROME C5"/>
    <property type="match status" value="1"/>
</dbReference>
<dbReference type="Pfam" id="PF00149">
    <property type="entry name" value="Metallophos"/>
    <property type="match status" value="1"/>
</dbReference>
<dbReference type="PIRSF" id="PIRSF000903">
    <property type="entry name" value="B5n-ttraPtase_sm"/>
    <property type="match status" value="1"/>
</dbReference>
<dbReference type="SUPFAM" id="SSF56300">
    <property type="entry name" value="Metallo-dependent phosphatases"/>
    <property type="match status" value="1"/>
</dbReference>
<protein>
    <recommendedName>
        <fullName evidence="1">Bis(5'-nucleosyl)-tetraphosphatase, symmetrical</fullName>
        <ecNumber evidence="1">3.6.1.41</ecNumber>
    </recommendedName>
    <alternativeName>
        <fullName evidence="1">Ap4A hydrolase</fullName>
    </alternativeName>
    <alternativeName>
        <fullName evidence="1">Diadenosine 5',5'''-P1,P4-tetraphosphate pyrophosphohydrolase</fullName>
    </alternativeName>
    <alternativeName>
        <fullName evidence="1">Diadenosine tetraphosphatase</fullName>
    </alternativeName>
</protein>
<gene>
    <name evidence="1" type="primary">apaH</name>
    <name type="ordered locus">Noc_1345</name>
</gene>
<proteinExistence type="inferred from homology"/>
<reference key="1">
    <citation type="journal article" date="2006" name="Appl. Environ. Microbiol.">
        <title>Complete genome sequence of the marine, chemolithoautotrophic, ammonia-oxidizing bacterium Nitrosococcus oceani ATCC 19707.</title>
        <authorList>
            <person name="Klotz M.G."/>
            <person name="Arp D.J."/>
            <person name="Chain P.S.G."/>
            <person name="El-Sheikh A.F."/>
            <person name="Hauser L.J."/>
            <person name="Hommes N.G."/>
            <person name="Larimer F.W."/>
            <person name="Malfatti S.A."/>
            <person name="Norton J.M."/>
            <person name="Poret-Peterson A.T."/>
            <person name="Vergez L.M."/>
            <person name="Ward B.B."/>
        </authorList>
    </citation>
    <scope>NUCLEOTIDE SEQUENCE [LARGE SCALE GENOMIC DNA]</scope>
    <source>
        <strain>ATCC 19707 / BCRC 17464 / JCM 30415 / NCIMB 11848 / C-107</strain>
    </source>
</reference>
<name>APAH_NITOC</name>
<feature type="chain" id="PRO_1000012073" description="Bis(5'-nucleosyl)-tetraphosphatase, symmetrical">
    <location>
        <begin position="1"/>
        <end position="278"/>
    </location>
</feature>